<sequence length="2925" mass="328517">MAEITLDRTLVLLSSEKQRERSEGLAVSLFVLIVVFVIDPCISSRSSLNDKACHKIFESLFRFISSEKSLYNRGNSKGPSASRLSTCASVLRLAVDALLHNLRAKSVRAVVDHITETLQDTGGSLFELLGVDYTKCLTALLNYPPHVEHLGASEWEKLMGFCLKIMNTQDYEDDRSHTGSDSRSTLDDFLGTGGTPTPSRSMPTLTAREKPKRDKGAISEAVVCIQLLTASVNAPVQEPAAKILHGLVGYVKSSHITGSGHQSAFNSINSVIMRVLSDQSELVQSILLDLIPVICHLWATKLVGLKDELLVTIMLCIVLLTAATRQEPSELLSRYTEDLLGALYKEYIKRPEKDILQVDELVFHQKTSAAVDKILIWPRLESGKSEHNWTVIWAIANLVDLSEEITARSSSPRTSTETLNKRQRLTSMVDEIHRDCASSSGARRVCALQLIPLIPRHHASVDSKSSLLLRLLPNILDENGILASWTMITIASLAGSPNADSPSLRAIWQQAWELTCRASTSQATSRASCILMNSILEYNLLEYSIVAEATSSMLTSVNLNGPSTMSDASLTLWATTTRMTARVNPGSLPNASKQICAWLREVWVIGTVTDRTQLAQLAAFARPLDLLNLLLACTNRHYIPPKPQFRGATSLIAKGWHFLHRSKQLLNYLFQLGGILDFDMWDTDDTIHLETFPRQDPNDNMVLDLLQVKSEMFLQAFQSLYEDKSHHVTVEIVQIVTSFCILVALYTECLPHLSASKFHNLQQNCERLWEIICTFLASHELEFIQGCLVVLSPFLNPEQFSYNPESTISKALLRLVIPLVSLLEAYRRSQRDNLALHNDEPMDLDDTLFNSKDRLAEVTSIVKSNREALPLFQEFSSFQRCITIQLSVLQKTNAFLRNHDQHSSRALVEYLIDLDEVDILAASNSLPYVYRAISGMDRTSLLDILEDLAEKCLQTYELERCEASHLLCIHMMHSFVKAWVSSEADSLSGSASDIYTWFRDVLLAKDMASPSVLVVFSELLVDVINTNASYSSGESNTSPRTSLLKILEKGSIPVKFDVGNLIPRLFGHYSLNDHDAIFNDVLRHLPKESDWVEGIALRLFILGQLASRWHTLLRRSIYHMFETPAHVPHSLQYAEKCICDVANKLGLKDAKELFRLFSSQILYTWTEQESITAMPFSIFSYASIKDMLGDVQDELVGQIIMRAREDEEIEMSKYMGKPFVDLLATSFYKAEAYSIARDISTPPGQGSQPKGVETRLKKILGTEQFMELIDQQFPQTIAAFFGSLDQYEQVERALSKRAKFHDALDGLRCILGKSASKIVLPANQQPSFRARYLIDELEFLCKRSGYELETIWTPTLASYVCRTLLESIHPALGSFHACSVIRKIRVLLCVAGSVMLRDYPFEMTLHAMLPFLVDIYCSEDALGIFWYLLEAGQPYLAETPGLMAGVAVSTLLSLKKFLASPPVDTAQQGQSKIVTANIERFLQWFGEYINTYESSLDAETQESFRRVVKSSQATSTVESHSDDSNERDVILEILDDRSSERSLLSKTVSDHVIALLCADSEEPLGNYHKLNESDRDATANIVAIYQTLQSFNTGSGYRLWAAKVIGRAFATTGKVCDALLREQDLSLFKSQLSDLRLEVHCYSKASILQELCNMLQNNSHLEVGLVERTLQLIISNLARYPDFEQCAGVVPLYLMKAFTWDPYQCPPIPTLAPETERDDAKVNWQTSNSLSQWARGIALFLSKSAAEDPVIGSLSHIIYVIPELAVRILPYMLHDVLLAELKGEANIRQKVSQIFKQALCDVHDTTISHARLAIDCILYLRNQPKPNEATIVERDEWLEIDFAEASLAASRCRLPKTALIFLEIHASRVIFGSRRSSLAKYEAPPDMLHDIFKDIDDPDFFYGIQQSPSLDSVMERLQHESSGFKNLLFQSAQYDSEIQMSADQNAYGVLKALNSTNLQGIANSIFSASGGGFVDTSSSFDSMLQAATNLRQWDIPVSPLNPSPPATVFRAFQSLNTSGSLAEASKSINECLLTTLESLTSASRSAMSLRTAMRVLGVITEVSDVLDARSTEEIDHEWQKIAARDSWLKTTSVHEIGEILNSHEALFSSINRKSYLRSSTNISDHDAQLLEVKAIRQSLHITRTQGIQQASLKSAVYLSKLAHQCSALGINIEGAAKFDLANVLWDQGEMTASIRMLHQLKDQNDLHKQAVPISRAELLVTLVSSLHIDSLRTKPCSFRTNSTSCKGHHVAEARLEKPETIIQDYLLTAVKELKGRSGGEEAGRVYHGFATFCDQQLQNPDGLEDFTRVEQLRNRKEKEVRALEDMMKAAEGREREALKFHRGRTKQWFDLDDREYQRLRRSREAFLQQCLENYLLCLRESETYNNDVLRFCALWLDKSDSDIANAAVSKHLGQVPSRKFAPLMNQLTSRLLDVPDEFQKMLFSLITRICVEHPFHGMYQIFASSKSKGGKDETALSRNRAAGRLVEGLKNDKRIGPTWVAVHNTNINYVRFAIDRPDEKLKSGARVPLRKLQTGGRLEQDAATQKLPPPTMNIEIRVDCDYRDVPKLVKYHPEFTIASGVSAPKIVSAFASNGLRYKQLFKGGNDDLRQDAIMEQVFEQVSNLLKDHQATRQRNLGIRTYKVLPLTSNAGIIEFVPHTIPLHDYLMPAHQKYYPKDMKPNVCRKHISDVQTRSFEQRVRTYRQVTEHFHPVMKYFFMEKFNNPDDWFSKRLSYTRSTAAISILGHVLGLGDRHGHNILLDERTGEVVHIDLGVAFEQGRVLPVPEVVPFRLTRDLVDGMGVTKTEGVFRRCCEFTLETLRRESYSIMTILDVLRYDPLYSWTVSPLRMKKMQDASEAGGGPPMLPGAADQRPSNEPSEADRALTVVAKKLGKTLSVTATVNELIQQATDEKNLAVLYCGWAAYA</sequence>
<evidence type="ECO:0000250" key="1"/>
<evidence type="ECO:0000255" key="2">
    <source>
        <dbReference type="PROSITE-ProRule" id="PRU00269"/>
    </source>
</evidence>
<evidence type="ECO:0000255" key="3">
    <source>
        <dbReference type="PROSITE-ProRule" id="PRU00534"/>
    </source>
</evidence>
<evidence type="ECO:0000255" key="4">
    <source>
        <dbReference type="PROSITE-ProRule" id="PRU00535"/>
    </source>
</evidence>
<evidence type="ECO:0000256" key="5">
    <source>
        <dbReference type="SAM" id="MobiDB-lite"/>
    </source>
</evidence>
<evidence type="ECO:0000305" key="6"/>
<keyword id="KW-0067">ATP-binding</keyword>
<keyword id="KW-0156">Chromatin regulator</keyword>
<keyword id="KW-0158">Chromosome</keyword>
<keyword id="KW-0227">DNA damage</keyword>
<keyword id="KW-0418">Kinase</keyword>
<keyword id="KW-0547">Nucleotide-binding</keyword>
<keyword id="KW-0539">Nucleus</keyword>
<keyword id="KW-1185">Reference proteome</keyword>
<keyword id="KW-0723">Serine/threonine-protein kinase</keyword>
<keyword id="KW-0779">Telomere</keyword>
<keyword id="KW-0808">Transferase</keyword>
<comment type="function">
    <text evidence="1">Serine/threonine protein kinase which activates checkpoint signaling upon genotoxic stresses such as ionizing radiation (IR), ultraviolet light (UV), or DNA replication stalling, thereby acting as a DNA damage sensor. Recognizes the substrate consensus sequence [ST]-Q. Phosphorylates histone H2A to form H2AS128ph (gamma-H2A) at sites of DNA damage, involved in the regulation of DNA damage response mechanism. Required for the control of telomere length and genome stability (By similarity).</text>
</comment>
<comment type="catalytic activity">
    <reaction>
        <text>L-seryl-[protein] + ATP = O-phospho-L-seryl-[protein] + ADP + H(+)</text>
        <dbReference type="Rhea" id="RHEA:17989"/>
        <dbReference type="Rhea" id="RHEA-COMP:9863"/>
        <dbReference type="Rhea" id="RHEA-COMP:11604"/>
        <dbReference type="ChEBI" id="CHEBI:15378"/>
        <dbReference type="ChEBI" id="CHEBI:29999"/>
        <dbReference type="ChEBI" id="CHEBI:30616"/>
        <dbReference type="ChEBI" id="CHEBI:83421"/>
        <dbReference type="ChEBI" id="CHEBI:456216"/>
        <dbReference type="EC" id="2.7.11.1"/>
    </reaction>
</comment>
<comment type="catalytic activity">
    <reaction>
        <text>L-threonyl-[protein] + ATP = O-phospho-L-threonyl-[protein] + ADP + H(+)</text>
        <dbReference type="Rhea" id="RHEA:46608"/>
        <dbReference type="Rhea" id="RHEA-COMP:11060"/>
        <dbReference type="Rhea" id="RHEA-COMP:11605"/>
        <dbReference type="ChEBI" id="CHEBI:15378"/>
        <dbReference type="ChEBI" id="CHEBI:30013"/>
        <dbReference type="ChEBI" id="CHEBI:30616"/>
        <dbReference type="ChEBI" id="CHEBI:61977"/>
        <dbReference type="ChEBI" id="CHEBI:456216"/>
        <dbReference type="EC" id="2.7.11.1"/>
    </reaction>
</comment>
<comment type="subunit">
    <text evidence="1">Associates with DNA double-strand breaks.</text>
</comment>
<comment type="subcellular location">
    <subcellularLocation>
        <location evidence="1">Nucleus</location>
    </subcellularLocation>
    <subcellularLocation>
        <location evidence="1">Chromosome</location>
        <location evidence="1">Telomere</location>
    </subcellularLocation>
    <text evidence="1">Localizes to nuclear DNA repair foci with other DNA repair proteins in response to DNA double strand breaks.</text>
</comment>
<comment type="similarity">
    <text evidence="6">Belongs to the PI3/PI4-kinase family. ATM subfamily.</text>
</comment>
<organism>
    <name type="scientific">Aspergillus oryzae (strain ATCC 42149 / RIB 40)</name>
    <name type="common">Yellow koji mold</name>
    <dbReference type="NCBI Taxonomy" id="510516"/>
    <lineage>
        <taxon>Eukaryota</taxon>
        <taxon>Fungi</taxon>
        <taxon>Dikarya</taxon>
        <taxon>Ascomycota</taxon>
        <taxon>Pezizomycotina</taxon>
        <taxon>Eurotiomycetes</taxon>
        <taxon>Eurotiomycetidae</taxon>
        <taxon>Eurotiales</taxon>
        <taxon>Aspergillaceae</taxon>
        <taxon>Aspergillus</taxon>
        <taxon>Aspergillus subgen. Circumdati</taxon>
    </lineage>
</organism>
<name>ATM_ASPOR</name>
<gene>
    <name type="primary">tel1</name>
    <name type="ORF">AO090120000393</name>
</gene>
<reference key="1">
    <citation type="journal article" date="2005" name="Nature">
        <title>Genome sequencing and analysis of Aspergillus oryzae.</title>
        <authorList>
            <person name="Machida M."/>
            <person name="Asai K."/>
            <person name="Sano M."/>
            <person name="Tanaka T."/>
            <person name="Kumagai T."/>
            <person name="Terai G."/>
            <person name="Kusumoto K."/>
            <person name="Arima T."/>
            <person name="Akita O."/>
            <person name="Kashiwagi Y."/>
            <person name="Abe K."/>
            <person name="Gomi K."/>
            <person name="Horiuchi H."/>
            <person name="Kitamoto K."/>
            <person name="Kobayashi T."/>
            <person name="Takeuchi M."/>
            <person name="Denning D.W."/>
            <person name="Galagan J.E."/>
            <person name="Nierman W.C."/>
            <person name="Yu J."/>
            <person name="Archer D.B."/>
            <person name="Bennett J.W."/>
            <person name="Bhatnagar D."/>
            <person name="Cleveland T.E."/>
            <person name="Fedorova N.D."/>
            <person name="Gotoh O."/>
            <person name="Horikawa H."/>
            <person name="Hosoyama A."/>
            <person name="Ichinomiya M."/>
            <person name="Igarashi R."/>
            <person name="Iwashita K."/>
            <person name="Juvvadi P.R."/>
            <person name="Kato M."/>
            <person name="Kato Y."/>
            <person name="Kin T."/>
            <person name="Kokubun A."/>
            <person name="Maeda H."/>
            <person name="Maeyama N."/>
            <person name="Maruyama J."/>
            <person name="Nagasaki H."/>
            <person name="Nakajima T."/>
            <person name="Oda K."/>
            <person name="Okada K."/>
            <person name="Paulsen I."/>
            <person name="Sakamoto K."/>
            <person name="Sawano T."/>
            <person name="Takahashi M."/>
            <person name="Takase K."/>
            <person name="Terabayashi Y."/>
            <person name="Wortman J.R."/>
            <person name="Yamada O."/>
            <person name="Yamagata Y."/>
            <person name="Anazawa H."/>
            <person name="Hata Y."/>
            <person name="Koide Y."/>
            <person name="Komori T."/>
            <person name="Koyama Y."/>
            <person name="Minetoki T."/>
            <person name="Suharnan S."/>
            <person name="Tanaka A."/>
            <person name="Isono K."/>
            <person name="Kuhara S."/>
            <person name="Ogasawara N."/>
            <person name="Kikuchi H."/>
        </authorList>
    </citation>
    <scope>NUCLEOTIDE SEQUENCE [LARGE SCALE GENOMIC DNA]</scope>
    <source>
        <strain>ATCC 42149 / RIB 40</strain>
    </source>
</reference>
<accession>Q2U639</accession>
<dbReference type="EC" id="2.7.11.1"/>
<dbReference type="EMBL" id="BA000053">
    <property type="protein sequence ID" value="BAE62976.1"/>
    <property type="molecule type" value="Genomic_DNA"/>
</dbReference>
<dbReference type="SMR" id="Q2U639"/>
<dbReference type="STRING" id="510516.Q2U639"/>
<dbReference type="EnsemblFungi" id="BAE62976">
    <property type="protein sequence ID" value="BAE62976"/>
    <property type="gene ID" value="AO090120000393"/>
</dbReference>
<dbReference type="HOGENOM" id="CLU_000178_8_2_1"/>
<dbReference type="OMA" id="HACSVIR"/>
<dbReference type="Proteomes" id="UP000006564">
    <property type="component" value="Chromosome 5"/>
</dbReference>
<dbReference type="GO" id="GO:0000781">
    <property type="term" value="C:chromosome, telomeric region"/>
    <property type="evidence" value="ECO:0007669"/>
    <property type="project" value="UniProtKB-SubCell"/>
</dbReference>
<dbReference type="GO" id="GO:0005634">
    <property type="term" value="C:nucleus"/>
    <property type="evidence" value="ECO:0007669"/>
    <property type="project" value="UniProtKB-SubCell"/>
</dbReference>
<dbReference type="GO" id="GO:0005524">
    <property type="term" value="F:ATP binding"/>
    <property type="evidence" value="ECO:0007669"/>
    <property type="project" value="UniProtKB-KW"/>
</dbReference>
<dbReference type="GO" id="GO:0106310">
    <property type="term" value="F:protein serine kinase activity"/>
    <property type="evidence" value="ECO:0007669"/>
    <property type="project" value="RHEA"/>
</dbReference>
<dbReference type="GO" id="GO:0004674">
    <property type="term" value="F:protein serine/threonine kinase activity"/>
    <property type="evidence" value="ECO:0007669"/>
    <property type="project" value="UniProtKB-KW"/>
</dbReference>
<dbReference type="GO" id="GO:0006325">
    <property type="term" value="P:chromatin organization"/>
    <property type="evidence" value="ECO:0007669"/>
    <property type="project" value="UniProtKB-KW"/>
</dbReference>
<dbReference type="GO" id="GO:0006281">
    <property type="term" value="P:DNA repair"/>
    <property type="evidence" value="ECO:0007669"/>
    <property type="project" value="InterPro"/>
</dbReference>
<dbReference type="GO" id="GO:0035556">
    <property type="term" value="P:intracellular signal transduction"/>
    <property type="evidence" value="ECO:0007669"/>
    <property type="project" value="UniProtKB-ARBA"/>
</dbReference>
<dbReference type="GO" id="GO:0019222">
    <property type="term" value="P:regulation of metabolic process"/>
    <property type="evidence" value="ECO:0007669"/>
    <property type="project" value="UniProtKB-ARBA"/>
</dbReference>
<dbReference type="CDD" id="cd05171">
    <property type="entry name" value="PIKKc_ATM"/>
    <property type="match status" value="1"/>
</dbReference>
<dbReference type="FunFam" id="1.10.1070.11:FF:000025">
    <property type="entry name" value="Serine/threonine-protein kinase Tel1"/>
    <property type="match status" value="1"/>
</dbReference>
<dbReference type="FunFam" id="3.30.1010.10:FF:000019">
    <property type="entry name" value="Serine/threonine-protein kinase Tel1"/>
    <property type="match status" value="1"/>
</dbReference>
<dbReference type="Gene3D" id="1.10.1070.11">
    <property type="entry name" value="Phosphatidylinositol 3-/4-kinase, catalytic domain"/>
    <property type="match status" value="1"/>
</dbReference>
<dbReference type="Gene3D" id="3.30.1010.10">
    <property type="entry name" value="Phosphatidylinositol 3-kinase Catalytic Subunit, Chain A, domain 4"/>
    <property type="match status" value="1"/>
</dbReference>
<dbReference type="InterPro" id="IPR038980">
    <property type="entry name" value="ATM_plant"/>
</dbReference>
<dbReference type="InterPro" id="IPR003152">
    <property type="entry name" value="FATC_dom"/>
</dbReference>
<dbReference type="InterPro" id="IPR011009">
    <property type="entry name" value="Kinase-like_dom_sf"/>
</dbReference>
<dbReference type="InterPro" id="IPR000403">
    <property type="entry name" value="PI3/4_kinase_cat_dom"/>
</dbReference>
<dbReference type="InterPro" id="IPR036940">
    <property type="entry name" value="PI3/4_kinase_cat_sf"/>
</dbReference>
<dbReference type="InterPro" id="IPR018936">
    <property type="entry name" value="PI3/4_kinase_CS"/>
</dbReference>
<dbReference type="InterPro" id="IPR003151">
    <property type="entry name" value="PIK-rel_kinase_FAT"/>
</dbReference>
<dbReference type="InterPro" id="IPR014009">
    <property type="entry name" value="PIK_FAT"/>
</dbReference>
<dbReference type="InterPro" id="IPR044107">
    <property type="entry name" value="PIKKc_ATM"/>
</dbReference>
<dbReference type="InterPro" id="IPR021668">
    <property type="entry name" value="TAN"/>
</dbReference>
<dbReference type="PANTHER" id="PTHR37079">
    <property type="entry name" value="SERINE/THREONINE-PROTEIN KINASE ATM"/>
    <property type="match status" value="1"/>
</dbReference>
<dbReference type="PANTHER" id="PTHR37079:SF4">
    <property type="entry name" value="SERINE_THREONINE-PROTEIN KINASE ATM"/>
    <property type="match status" value="1"/>
</dbReference>
<dbReference type="Pfam" id="PF02259">
    <property type="entry name" value="FAT"/>
    <property type="match status" value="1"/>
</dbReference>
<dbReference type="Pfam" id="PF02260">
    <property type="entry name" value="FATC"/>
    <property type="match status" value="1"/>
</dbReference>
<dbReference type="Pfam" id="PF00454">
    <property type="entry name" value="PI3_PI4_kinase"/>
    <property type="match status" value="1"/>
</dbReference>
<dbReference type="Pfam" id="PF11640">
    <property type="entry name" value="TAN"/>
    <property type="match status" value="1"/>
</dbReference>
<dbReference type="SMART" id="SM01343">
    <property type="entry name" value="FATC"/>
    <property type="match status" value="1"/>
</dbReference>
<dbReference type="SMART" id="SM00146">
    <property type="entry name" value="PI3Kc"/>
    <property type="match status" value="1"/>
</dbReference>
<dbReference type="SMART" id="SM01342">
    <property type="entry name" value="TAN"/>
    <property type="match status" value="1"/>
</dbReference>
<dbReference type="SUPFAM" id="SSF56112">
    <property type="entry name" value="Protein kinase-like (PK-like)"/>
    <property type="match status" value="1"/>
</dbReference>
<dbReference type="PROSITE" id="PS51189">
    <property type="entry name" value="FAT"/>
    <property type="match status" value="1"/>
</dbReference>
<dbReference type="PROSITE" id="PS51190">
    <property type="entry name" value="FATC"/>
    <property type="match status" value="1"/>
</dbReference>
<dbReference type="PROSITE" id="PS00915">
    <property type="entry name" value="PI3_4_KINASE_1"/>
    <property type="match status" value="1"/>
</dbReference>
<dbReference type="PROSITE" id="PS00916">
    <property type="entry name" value="PI3_4_KINASE_2"/>
    <property type="match status" value="1"/>
</dbReference>
<dbReference type="PROSITE" id="PS50290">
    <property type="entry name" value="PI3_4_KINASE_3"/>
    <property type="match status" value="1"/>
</dbReference>
<feature type="chain" id="PRO_0000227697" description="Serine/threonine-protein kinase tel1">
    <location>
        <begin position="1"/>
        <end position="2925"/>
    </location>
</feature>
<feature type="domain" description="FAT" evidence="3">
    <location>
        <begin position="1844"/>
        <end position="2467"/>
    </location>
</feature>
<feature type="domain" description="PI3K/PI4K catalytic" evidence="2">
    <location>
        <begin position="2571"/>
        <end position="2882"/>
    </location>
</feature>
<feature type="domain" description="FATC" evidence="3 4">
    <location>
        <begin position="2893"/>
        <end position="2925"/>
    </location>
</feature>
<feature type="region of interest" description="Disordered" evidence="5">
    <location>
        <begin position="172"/>
        <end position="211"/>
    </location>
</feature>
<feature type="region of interest" description="G-loop" evidence="2">
    <location>
        <begin position="2577"/>
        <end position="2583"/>
    </location>
</feature>
<feature type="region of interest" description="Catalytic loop" evidence="2">
    <location>
        <begin position="2749"/>
        <end position="2757"/>
    </location>
</feature>
<feature type="region of interest" description="Activation loop" evidence="2">
    <location>
        <begin position="2769"/>
        <end position="2793"/>
    </location>
</feature>
<feature type="region of interest" description="Disordered" evidence="5">
    <location>
        <begin position="2853"/>
        <end position="2879"/>
    </location>
</feature>
<feature type="compositionally biased region" description="Basic and acidic residues" evidence="5">
    <location>
        <begin position="174"/>
        <end position="186"/>
    </location>
</feature>
<feature type="compositionally biased region" description="Polar residues" evidence="5">
    <location>
        <begin position="195"/>
        <end position="204"/>
    </location>
</feature>
<protein>
    <recommendedName>
        <fullName>Serine/threonine-protein kinase tel1</fullName>
        <ecNumber>2.7.11.1</ecNumber>
    </recommendedName>
    <alternativeName>
        <fullName>ATM homolog</fullName>
    </alternativeName>
    <alternativeName>
        <fullName>DNA-damage checkpoint kinase tel1</fullName>
    </alternativeName>
    <alternativeName>
        <fullName>Telomere length regulation protein 1</fullName>
    </alternativeName>
</protein>
<proteinExistence type="inferred from homology"/>